<sequence length="151" mass="17370">MRCPFCGEADTQVKDSRPTEDGAAIRRRRFCPQCSQRFTTIERVQLRELVVVKADQRRVAFDRDKLARSIRTALRKRPVDDERIERIVNGIVRKLEASGEAEIPSSEIGELVMDTLKEVDAVAYVRFASVYRDFREAKDFKAFLGTMDPSK</sequence>
<reference key="1">
    <citation type="submission" date="2007-05" db="EMBL/GenBank/DDBJ databases">
        <title>Complete sequence of chromosome of Acidiphilium cryptum JF-5.</title>
        <authorList>
            <consortium name="US DOE Joint Genome Institute"/>
            <person name="Copeland A."/>
            <person name="Lucas S."/>
            <person name="Lapidus A."/>
            <person name="Barry K."/>
            <person name="Detter J.C."/>
            <person name="Glavina del Rio T."/>
            <person name="Hammon N."/>
            <person name="Israni S."/>
            <person name="Dalin E."/>
            <person name="Tice H."/>
            <person name="Pitluck S."/>
            <person name="Sims D."/>
            <person name="Brettin T."/>
            <person name="Bruce D."/>
            <person name="Han C."/>
            <person name="Schmutz J."/>
            <person name="Larimer F."/>
            <person name="Land M."/>
            <person name="Hauser L."/>
            <person name="Kyrpides N."/>
            <person name="Kim E."/>
            <person name="Magnuson T."/>
            <person name="Richardson P."/>
        </authorList>
    </citation>
    <scope>NUCLEOTIDE SEQUENCE [LARGE SCALE GENOMIC DNA]</scope>
    <source>
        <strain>JF-5</strain>
    </source>
</reference>
<gene>
    <name evidence="1" type="primary">nrdR</name>
    <name type="ordered locus">Acry_2122</name>
</gene>
<dbReference type="EMBL" id="CP000697">
    <property type="protein sequence ID" value="ABQ31321.1"/>
    <property type="molecule type" value="Genomic_DNA"/>
</dbReference>
<dbReference type="RefSeq" id="WP_007423352.1">
    <property type="nucleotide sequence ID" value="NC_009484.1"/>
</dbReference>
<dbReference type="SMR" id="A5G0D9"/>
<dbReference type="STRING" id="349163.Acry_2122"/>
<dbReference type="KEGG" id="acr:Acry_2122"/>
<dbReference type="eggNOG" id="COG1327">
    <property type="taxonomic scope" value="Bacteria"/>
</dbReference>
<dbReference type="HOGENOM" id="CLU_108412_0_1_5"/>
<dbReference type="Proteomes" id="UP000000245">
    <property type="component" value="Chromosome"/>
</dbReference>
<dbReference type="GO" id="GO:0005524">
    <property type="term" value="F:ATP binding"/>
    <property type="evidence" value="ECO:0007669"/>
    <property type="project" value="UniProtKB-KW"/>
</dbReference>
<dbReference type="GO" id="GO:0003677">
    <property type="term" value="F:DNA binding"/>
    <property type="evidence" value="ECO:0007669"/>
    <property type="project" value="UniProtKB-KW"/>
</dbReference>
<dbReference type="GO" id="GO:0008270">
    <property type="term" value="F:zinc ion binding"/>
    <property type="evidence" value="ECO:0007669"/>
    <property type="project" value="UniProtKB-UniRule"/>
</dbReference>
<dbReference type="GO" id="GO:0045892">
    <property type="term" value="P:negative regulation of DNA-templated transcription"/>
    <property type="evidence" value="ECO:0007669"/>
    <property type="project" value="UniProtKB-UniRule"/>
</dbReference>
<dbReference type="HAMAP" id="MF_00440">
    <property type="entry name" value="NrdR"/>
    <property type="match status" value="1"/>
</dbReference>
<dbReference type="InterPro" id="IPR005144">
    <property type="entry name" value="ATP-cone_dom"/>
</dbReference>
<dbReference type="InterPro" id="IPR055173">
    <property type="entry name" value="NrdR-like_N"/>
</dbReference>
<dbReference type="InterPro" id="IPR003796">
    <property type="entry name" value="RNR_NrdR-like"/>
</dbReference>
<dbReference type="NCBIfam" id="TIGR00244">
    <property type="entry name" value="transcriptional regulator NrdR"/>
    <property type="match status" value="1"/>
</dbReference>
<dbReference type="PANTHER" id="PTHR30455">
    <property type="entry name" value="TRANSCRIPTIONAL REPRESSOR NRDR"/>
    <property type="match status" value="1"/>
</dbReference>
<dbReference type="PANTHER" id="PTHR30455:SF2">
    <property type="entry name" value="TRANSCRIPTIONAL REPRESSOR NRDR"/>
    <property type="match status" value="1"/>
</dbReference>
<dbReference type="Pfam" id="PF03477">
    <property type="entry name" value="ATP-cone"/>
    <property type="match status" value="1"/>
</dbReference>
<dbReference type="Pfam" id="PF22811">
    <property type="entry name" value="Zn_ribbon_NrdR"/>
    <property type="match status" value="1"/>
</dbReference>
<dbReference type="PROSITE" id="PS51161">
    <property type="entry name" value="ATP_CONE"/>
    <property type="match status" value="1"/>
</dbReference>
<comment type="function">
    <text evidence="1">Negatively regulates transcription of bacterial ribonucleotide reductase nrd genes and operons by binding to NrdR-boxes.</text>
</comment>
<comment type="cofactor">
    <cofactor evidence="1">
        <name>Zn(2+)</name>
        <dbReference type="ChEBI" id="CHEBI:29105"/>
    </cofactor>
    <text evidence="1">Binds 1 zinc ion.</text>
</comment>
<comment type="similarity">
    <text evidence="1">Belongs to the NrdR family.</text>
</comment>
<evidence type="ECO:0000255" key="1">
    <source>
        <dbReference type="HAMAP-Rule" id="MF_00440"/>
    </source>
</evidence>
<evidence type="ECO:0000256" key="2">
    <source>
        <dbReference type="SAM" id="MobiDB-lite"/>
    </source>
</evidence>
<protein>
    <recommendedName>
        <fullName evidence="1">Transcriptional repressor NrdR</fullName>
    </recommendedName>
</protein>
<keyword id="KW-0067">ATP-binding</keyword>
<keyword id="KW-0238">DNA-binding</keyword>
<keyword id="KW-0479">Metal-binding</keyword>
<keyword id="KW-0547">Nucleotide-binding</keyword>
<keyword id="KW-1185">Reference proteome</keyword>
<keyword id="KW-0678">Repressor</keyword>
<keyword id="KW-0804">Transcription</keyword>
<keyword id="KW-0805">Transcription regulation</keyword>
<keyword id="KW-0862">Zinc</keyword>
<keyword id="KW-0863">Zinc-finger</keyword>
<organism>
    <name type="scientific">Acidiphilium cryptum (strain JF-5)</name>
    <dbReference type="NCBI Taxonomy" id="349163"/>
    <lineage>
        <taxon>Bacteria</taxon>
        <taxon>Pseudomonadati</taxon>
        <taxon>Pseudomonadota</taxon>
        <taxon>Alphaproteobacteria</taxon>
        <taxon>Acetobacterales</taxon>
        <taxon>Acidocellaceae</taxon>
        <taxon>Acidiphilium</taxon>
    </lineage>
</organism>
<proteinExistence type="inferred from homology"/>
<name>NRDR_ACICJ</name>
<feature type="chain" id="PRO_1000080698" description="Transcriptional repressor NrdR">
    <location>
        <begin position="1"/>
        <end position="151"/>
    </location>
</feature>
<feature type="domain" description="ATP-cone" evidence="1">
    <location>
        <begin position="49"/>
        <end position="139"/>
    </location>
</feature>
<feature type="zinc finger region" evidence="1">
    <location>
        <begin position="3"/>
        <end position="34"/>
    </location>
</feature>
<feature type="region of interest" description="Disordered" evidence="2">
    <location>
        <begin position="1"/>
        <end position="21"/>
    </location>
</feature>
<feature type="compositionally biased region" description="Basic and acidic residues" evidence="2">
    <location>
        <begin position="11"/>
        <end position="21"/>
    </location>
</feature>
<accession>A5G0D9</accession>